<accession>A3CUG3</accession>
<name>MSRA_METMJ</name>
<organism>
    <name type="scientific">Methanoculleus marisnigri (strain ATCC 35101 / DSM 1498 / JR1)</name>
    <dbReference type="NCBI Taxonomy" id="368407"/>
    <lineage>
        <taxon>Archaea</taxon>
        <taxon>Methanobacteriati</taxon>
        <taxon>Methanobacteriota</taxon>
        <taxon>Stenosarchaea group</taxon>
        <taxon>Methanomicrobia</taxon>
        <taxon>Methanomicrobiales</taxon>
        <taxon>Methanomicrobiaceae</taxon>
        <taxon>Methanoculleus</taxon>
    </lineage>
</organism>
<feature type="chain" id="PRO_1000087354" description="Peptide methionine sulfoxide reductase MsrA">
    <location>
        <begin position="1"/>
        <end position="164"/>
    </location>
</feature>
<feature type="active site" evidence="1">
    <location>
        <position position="16"/>
    </location>
</feature>
<sequence>MAPEKSLERATFGAGCFWGVEEAFRRVPGVVETAVGFMGGTVENPTYPEVCTGRTGHAEVVQVTYDPGTVSYRALLDTFWDAHDPTTPNRQGPDIGTQYRSVIFVHTPEQEAEARASKEEMDQSGKFRRPIVTAIEPAGTFWRAEEYHQQYFAKRGGGQCRTVW</sequence>
<gene>
    <name evidence="1" type="primary">msrA</name>
    <name type="ordered locus">Memar_1080</name>
</gene>
<comment type="function">
    <text evidence="1">Has an important function as a repair enzyme for proteins that have been inactivated by oxidation. Catalyzes the reversible oxidation-reduction of methionine sulfoxide in proteins to methionine.</text>
</comment>
<comment type="catalytic activity">
    <reaction evidence="1">
        <text>L-methionyl-[protein] + [thioredoxin]-disulfide + H2O = L-methionyl-(S)-S-oxide-[protein] + [thioredoxin]-dithiol</text>
        <dbReference type="Rhea" id="RHEA:14217"/>
        <dbReference type="Rhea" id="RHEA-COMP:10698"/>
        <dbReference type="Rhea" id="RHEA-COMP:10700"/>
        <dbReference type="Rhea" id="RHEA-COMP:12313"/>
        <dbReference type="Rhea" id="RHEA-COMP:12315"/>
        <dbReference type="ChEBI" id="CHEBI:15377"/>
        <dbReference type="ChEBI" id="CHEBI:16044"/>
        <dbReference type="ChEBI" id="CHEBI:29950"/>
        <dbReference type="ChEBI" id="CHEBI:44120"/>
        <dbReference type="ChEBI" id="CHEBI:50058"/>
        <dbReference type="EC" id="1.8.4.11"/>
    </reaction>
</comment>
<comment type="catalytic activity">
    <reaction evidence="1">
        <text>[thioredoxin]-disulfide + L-methionine + H2O = L-methionine (S)-S-oxide + [thioredoxin]-dithiol</text>
        <dbReference type="Rhea" id="RHEA:19993"/>
        <dbReference type="Rhea" id="RHEA-COMP:10698"/>
        <dbReference type="Rhea" id="RHEA-COMP:10700"/>
        <dbReference type="ChEBI" id="CHEBI:15377"/>
        <dbReference type="ChEBI" id="CHEBI:29950"/>
        <dbReference type="ChEBI" id="CHEBI:50058"/>
        <dbReference type="ChEBI" id="CHEBI:57844"/>
        <dbReference type="ChEBI" id="CHEBI:58772"/>
        <dbReference type="EC" id="1.8.4.11"/>
    </reaction>
</comment>
<comment type="similarity">
    <text evidence="1">Belongs to the MsrA Met sulfoxide reductase family.</text>
</comment>
<proteinExistence type="inferred from homology"/>
<keyword id="KW-0560">Oxidoreductase</keyword>
<reference key="1">
    <citation type="journal article" date="2009" name="Stand. Genomic Sci.">
        <title>Complete genome sequence of Methanoculleus marisnigri Romesser et al. 1981 type strain JR1.</title>
        <authorList>
            <person name="Anderson I.J."/>
            <person name="Sieprawska-Lupa M."/>
            <person name="Lapidus A."/>
            <person name="Nolan M."/>
            <person name="Copeland A."/>
            <person name="Glavina Del Rio T."/>
            <person name="Tice H."/>
            <person name="Dalin E."/>
            <person name="Barry K."/>
            <person name="Saunders E."/>
            <person name="Han C."/>
            <person name="Brettin T."/>
            <person name="Detter J.C."/>
            <person name="Bruce D."/>
            <person name="Mikhailova N."/>
            <person name="Pitluck S."/>
            <person name="Hauser L."/>
            <person name="Land M."/>
            <person name="Lucas S."/>
            <person name="Richardson P."/>
            <person name="Whitman W.B."/>
            <person name="Kyrpides N.C."/>
        </authorList>
    </citation>
    <scope>NUCLEOTIDE SEQUENCE [LARGE SCALE GENOMIC DNA]</scope>
    <source>
        <strain>ATCC 35101 / DSM 1498 / JR1</strain>
    </source>
</reference>
<dbReference type="EC" id="1.8.4.11" evidence="1"/>
<dbReference type="EMBL" id="CP000562">
    <property type="protein sequence ID" value="ABN57013.1"/>
    <property type="molecule type" value="Genomic_DNA"/>
</dbReference>
<dbReference type="RefSeq" id="WP_011843924.1">
    <property type="nucleotide sequence ID" value="NC_009051.1"/>
</dbReference>
<dbReference type="SMR" id="A3CUG3"/>
<dbReference type="STRING" id="368407.Memar_1080"/>
<dbReference type="GeneID" id="4847227"/>
<dbReference type="GeneID" id="76731651"/>
<dbReference type="KEGG" id="mem:Memar_1080"/>
<dbReference type="eggNOG" id="arCOG02816">
    <property type="taxonomic scope" value="Archaea"/>
</dbReference>
<dbReference type="HOGENOM" id="CLU_031040_10_0_2"/>
<dbReference type="OrthoDB" id="7150at2157"/>
<dbReference type="Proteomes" id="UP000002146">
    <property type="component" value="Chromosome"/>
</dbReference>
<dbReference type="GO" id="GO:0033744">
    <property type="term" value="F:L-methionine:thioredoxin-disulfide S-oxidoreductase activity"/>
    <property type="evidence" value="ECO:0007669"/>
    <property type="project" value="RHEA"/>
</dbReference>
<dbReference type="GO" id="GO:0008113">
    <property type="term" value="F:peptide-methionine (S)-S-oxide reductase activity"/>
    <property type="evidence" value="ECO:0007669"/>
    <property type="project" value="UniProtKB-UniRule"/>
</dbReference>
<dbReference type="GO" id="GO:0036211">
    <property type="term" value="P:protein modification process"/>
    <property type="evidence" value="ECO:0007669"/>
    <property type="project" value="UniProtKB-UniRule"/>
</dbReference>
<dbReference type="Gene3D" id="3.30.1060.10">
    <property type="entry name" value="Peptide methionine sulphoxide reductase MsrA"/>
    <property type="match status" value="1"/>
</dbReference>
<dbReference type="HAMAP" id="MF_01401">
    <property type="entry name" value="MsrA"/>
    <property type="match status" value="1"/>
</dbReference>
<dbReference type="InterPro" id="IPR002569">
    <property type="entry name" value="Met_Sox_Rdtase_MsrA_dom"/>
</dbReference>
<dbReference type="InterPro" id="IPR036509">
    <property type="entry name" value="Met_Sox_Rdtase_MsrA_sf"/>
</dbReference>
<dbReference type="NCBIfam" id="TIGR00401">
    <property type="entry name" value="msrA"/>
    <property type="match status" value="1"/>
</dbReference>
<dbReference type="PANTHER" id="PTHR43774">
    <property type="entry name" value="PEPTIDE METHIONINE SULFOXIDE REDUCTASE"/>
    <property type="match status" value="1"/>
</dbReference>
<dbReference type="PANTHER" id="PTHR43774:SF1">
    <property type="entry name" value="PEPTIDE METHIONINE SULFOXIDE REDUCTASE MSRA 2"/>
    <property type="match status" value="1"/>
</dbReference>
<dbReference type="Pfam" id="PF01625">
    <property type="entry name" value="PMSR"/>
    <property type="match status" value="1"/>
</dbReference>
<dbReference type="SUPFAM" id="SSF55068">
    <property type="entry name" value="Peptide methionine sulfoxide reductase"/>
    <property type="match status" value="1"/>
</dbReference>
<protein>
    <recommendedName>
        <fullName evidence="1">Peptide methionine sulfoxide reductase MsrA</fullName>
        <shortName evidence="1">Protein-methionine-S-oxide reductase</shortName>
        <ecNumber evidence="1">1.8.4.11</ecNumber>
    </recommendedName>
    <alternativeName>
        <fullName evidence="1">Peptide-methionine (S)-S-oxide reductase</fullName>
        <shortName evidence="1">Peptide Met(O) reductase</shortName>
    </alternativeName>
</protein>
<evidence type="ECO:0000255" key="1">
    <source>
        <dbReference type="HAMAP-Rule" id="MF_01401"/>
    </source>
</evidence>